<keyword id="KW-0378">Hydrolase</keyword>
<keyword id="KW-0479">Metal-binding</keyword>
<keyword id="KW-1185">Reference proteome</keyword>
<keyword id="KW-0862">Zinc</keyword>
<name>GLO2_RHOP2</name>
<gene>
    <name evidence="1" type="primary">gloB</name>
    <name type="ordered locus">RPB_0069</name>
</gene>
<feature type="chain" id="PRO_0000309697" description="Hydroxyacylglutathione hydrolase">
    <location>
        <begin position="1"/>
        <end position="255"/>
    </location>
</feature>
<feature type="binding site" evidence="1">
    <location>
        <position position="56"/>
    </location>
    <ligand>
        <name>Zn(2+)</name>
        <dbReference type="ChEBI" id="CHEBI:29105"/>
        <label>1</label>
    </ligand>
</feature>
<feature type="binding site" evidence="1">
    <location>
        <position position="58"/>
    </location>
    <ligand>
        <name>Zn(2+)</name>
        <dbReference type="ChEBI" id="CHEBI:29105"/>
        <label>1</label>
    </ligand>
</feature>
<feature type="binding site" evidence="1">
    <location>
        <position position="60"/>
    </location>
    <ligand>
        <name>Zn(2+)</name>
        <dbReference type="ChEBI" id="CHEBI:29105"/>
        <label>2</label>
    </ligand>
</feature>
<feature type="binding site" evidence="1">
    <location>
        <position position="61"/>
    </location>
    <ligand>
        <name>Zn(2+)</name>
        <dbReference type="ChEBI" id="CHEBI:29105"/>
        <label>2</label>
    </ligand>
</feature>
<feature type="binding site" evidence="1">
    <location>
        <position position="114"/>
    </location>
    <ligand>
        <name>Zn(2+)</name>
        <dbReference type="ChEBI" id="CHEBI:29105"/>
        <label>1</label>
    </ligand>
</feature>
<feature type="binding site" evidence="1">
    <location>
        <position position="133"/>
    </location>
    <ligand>
        <name>Zn(2+)</name>
        <dbReference type="ChEBI" id="CHEBI:29105"/>
        <label>1</label>
    </ligand>
</feature>
<feature type="binding site" evidence="1">
    <location>
        <position position="133"/>
    </location>
    <ligand>
        <name>Zn(2+)</name>
        <dbReference type="ChEBI" id="CHEBI:29105"/>
        <label>2</label>
    </ligand>
</feature>
<feature type="binding site" evidence="1">
    <location>
        <position position="171"/>
    </location>
    <ligand>
        <name>Zn(2+)</name>
        <dbReference type="ChEBI" id="CHEBI:29105"/>
        <label>2</label>
    </ligand>
</feature>
<protein>
    <recommendedName>
        <fullName evidence="1">Hydroxyacylglutathione hydrolase</fullName>
        <ecNumber evidence="1">3.1.2.6</ecNumber>
    </recommendedName>
    <alternativeName>
        <fullName evidence="1">Glyoxalase II</fullName>
        <shortName evidence="1">Glx II</shortName>
    </alternativeName>
</protein>
<accession>Q2J429</accession>
<dbReference type="EC" id="3.1.2.6" evidence="1"/>
<dbReference type="EMBL" id="CP000250">
    <property type="protein sequence ID" value="ABD04781.1"/>
    <property type="molecule type" value="Genomic_DNA"/>
</dbReference>
<dbReference type="RefSeq" id="WP_011438971.1">
    <property type="nucleotide sequence ID" value="NC_007778.1"/>
</dbReference>
<dbReference type="SMR" id="Q2J429"/>
<dbReference type="STRING" id="316058.RPB_0069"/>
<dbReference type="KEGG" id="rpb:RPB_0069"/>
<dbReference type="eggNOG" id="COG0491">
    <property type="taxonomic scope" value="Bacteria"/>
</dbReference>
<dbReference type="HOGENOM" id="CLU_030571_4_1_5"/>
<dbReference type="OrthoDB" id="9802248at2"/>
<dbReference type="UniPathway" id="UPA00619">
    <property type="reaction ID" value="UER00676"/>
</dbReference>
<dbReference type="Proteomes" id="UP000008809">
    <property type="component" value="Chromosome"/>
</dbReference>
<dbReference type="GO" id="GO:0004416">
    <property type="term" value="F:hydroxyacylglutathione hydrolase activity"/>
    <property type="evidence" value="ECO:0007669"/>
    <property type="project" value="UniProtKB-UniRule"/>
</dbReference>
<dbReference type="GO" id="GO:0046872">
    <property type="term" value="F:metal ion binding"/>
    <property type="evidence" value="ECO:0007669"/>
    <property type="project" value="UniProtKB-KW"/>
</dbReference>
<dbReference type="GO" id="GO:0019243">
    <property type="term" value="P:methylglyoxal catabolic process to D-lactate via S-lactoyl-glutathione"/>
    <property type="evidence" value="ECO:0007669"/>
    <property type="project" value="InterPro"/>
</dbReference>
<dbReference type="CDD" id="cd07723">
    <property type="entry name" value="hydroxyacylglutathione_hydrolase_MBL-fold"/>
    <property type="match status" value="1"/>
</dbReference>
<dbReference type="Gene3D" id="3.60.15.10">
    <property type="entry name" value="Ribonuclease Z/Hydroxyacylglutathione hydrolase-like"/>
    <property type="match status" value="1"/>
</dbReference>
<dbReference type="HAMAP" id="MF_01374">
    <property type="entry name" value="Glyoxalase_2"/>
    <property type="match status" value="1"/>
</dbReference>
<dbReference type="InterPro" id="IPR035680">
    <property type="entry name" value="Clx_II_MBL"/>
</dbReference>
<dbReference type="InterPro" id="IPR050110">
    <property type="entry name" value="Glyoxalase_II_hydrolase"/>
</dbReference>
<dbReference type="InterPro" id="IPR032282">
    <property type="entry name" value="HAGH_C"/>
</dbReference>
<dbReference type="InterPro" id="IPR017782">
    <property type="entry name" value="Hydroxyacylglutathione_Hdrlase"/>
</dbReference>
<dbReference type="InterPro" id="IPR001279">
    <property type="entry name" value="Metallo-B-lactamas"/>
</dbReference>
<dbReference type="InterPro" id="IPR036866">
    <property type="entry name" value="RibonucZ/Hydroxyglut_hydro"/>
</dbReference>
<dbReference type="NCBIfam" id="TIGR03413">
    <property type="entry name" value="GSH_gloB"/>
    <property type="match status" value="1"/>
</dbReference>
<dbReference type="PANTHER" id="PTHR43705">
    <property type="entry name" value="HYDROXYACYLGLUTATHIONE HYDROLASE"/>
    <property type="match status" value="1"/>
</dbReference>
<dbReference type="PANTHER" id="PTHR43705:SF1">
    <property type="entry name" value="HYDROXYACYLGLUTATHIONE HYDROLASE GLOB"/>
    <property type="match status" value="1"/>
</dbReference>
<dbReference type="Pfam" id="PF16123">
    <property type="entry name" value="HAGH_C"/>
    <property type="match status" value="1"/>
</dbReference>
<dbReference type="Pfam" id="PF00753">
    <property type="entry name" value="Lactamase_B"/>
    <property type="match status" value="1"/>
</dbReference>
<dbReference type="PIRSF" id="PIRSF005457">
    <property type="entry name" value="Glx"/>
    <property type="match status" value="1"/>
</dbReference>
<dbReference type="SMART" id="SM00849">
    <property type="entry name" value="Lactamase_B"/>
    <property type="match status" value="1"/>
</dbReference>
<dbReference type="SUPFAM" id="SSF56281">
    <property type="entry name" value="Metallo-hydrolase/oxidoreductase"/>
    <property type="match status" value="1"/>
</dbReference>
<proteinExistence type="inferred from homology"/>
<comment type="function">
    <text evidence="1">Thiolesterase that catalyzes the hydrolysis of S-D-lactoyl-glutathione to form glutathione and D-lactic acid.</text>
</comment>
<comment type="catalytic activity">
    <reaction evidence="1">
        <text>an S-(2-hydroxyacyl)glutathione + H2O = a 2-hydroxy carboxylate + glutathione + H(+)</text>
        <dbReference type="Rhea" id="RHEA:21864"/>
        <dbReference type="ChEBI" id="CHEBI:15377"/>
        <dbReference type="ChEBI" id="CHEBI:15378"/>
        <dbReference type="ChEBI" id="CHEBI:57925"/>
        <dbReference type="ChEBI" id="CHEBI:58896"/>
        <dbReference type="ChEBI" id="CHEBI:71261"/>
        <dbReference type="EC" id="3.1.2.6"/>
    </reaction>
</comment>
<comment type="cofactor">
    <cofactor evidence="1">
        <name>Zn(2+)</name>
        <dbReference type="ChEBI" id="CHEBI:29105"/>
    </cofactor>
    <text evidence="1">Binds 2 Zn(2+) ions per subunit.</text>
</comment>
<comment type="pathway">
    <text evidence="1">Secondary metabolite metabolism; methylglyoxal degradation; (R)-lactate from methylglyoxal: step 2/2.</text>
</comment>
<comment type="subunit">
    <text evidence="1">Monomer.</text>
</comment>
<comment type="similarity">
    <text evidence="1">Belongs to the metallo-beta-lactamase superfamily. Glyoxalase II family.</text>
</comment>
<organism>
    <name type="scientific">Rhodopseudomonas palustris (strain HaA2)</name>
    <dbReference type="NCBI Taxonomy" id="316058"/>
    <lineage>
        <taxon>Bacteria</taxon>
        <taxon>Pseudomonadati</taxon>
        <taxon>Pseudomonadota</taxon>
        <taxon>Alphaproteobacteria</taxon>
        <taxon>Hyphomicrobiales</taxon>
        <taxon>Nitrobacteraceae</taxon>
        <taxon>Rhodopseudomonas</taxon>
    </lineage>
</organism>
<sequence length="255" mass="27545">MAADIRIVPCLTDNFGYLIHDPSSGATASIDAPEAAPLIAALEKEGWKLTDILVTHHHGDHVGGIAELKAKYHCRVVAPHDANAKIADADLRVEEGDVVKVGGLEARVLETPGHTLDHISYVFADDRALFAADTLFSIGCGRVFEGTYPMMWESLLKLRALPDDYKLYCGHEYTASNVKFALTIEPENAALQARAKQVEQQRGAGRPTIPVTLGEEKQANVFLRADVPSVAAAIGFAGESAADVFGELRERKNNS</sequence>
<reference key="1">
    <citation type="submission" date="2006-01" db="EMBL/GenBank/DDBJ databases">
        <title>Complete sequence of Rhodopseudomonas palustris HaA2.</title>
        <authorList>
            <consortium name="US DOE Joint Genome Institute"/>
            <person name="Copeland A."/>
            <person name="Lucas S."/>
            <person name="Lapidus A."/>
            <person name="Barry K."/>
            <person name="Detter J.C."/>
            <person name="Glavina T."/>
            <person name="Hammon N."/>
            <person name="Israni S."/>
            <person name="Pitluck S."/>
            <person name="Chain P."/>
            <person name="Malfatti S."/>
            <person name="Shin M."/>
            <person name="Vergez L."/>
            <person name="Schmutz J."/>
            <person name="Larimer F."/>
            <person name="Land M."/>
            <person name="Hauser L."/>
            <person name="Pelletier D.A."/>
            <person name="Kyrpides N."/>
            <person name="Anderson I."/>
            <person name="Oda Y."/>
            <person name="Harwood C.S."/>
            <person name="Richardson P."/>
        </authorList>
    </citation>
    <scope>NUCLEOTIDE SEQUENCE [LARGE SCALE GENOMIC DNA]</scope>
    <source>
        <strain>HaA2</strain>
    </source>
</reference>
<evidence type="ECO:0000255" key="1">
    <source>
        <dbReference type="HAMAP-Rule" id="MF_01374"/>
    </source>
</evidence>